<name>TPSN_CHLAE</name>
<keyword id="KW-1015">Disulfide bond</keyword>
<keyword id="KW-0256">Endoplasmic reticulum</keyword>
<keyword id="KW-0325">Glycoprotein</keyword>
<keyword id="KW-0393">Immunoglobulin domain</keyword>
<keyword id="KW-0472">Membrane</keyword>
<keyword id="KW-0732">Signal</keyword>
<keyword id="KW-0812">Transmembrane</keyword>
<keyword id="KW-1133">Transmembrane helix</keyword>
<evidence type="ECO:0000250" key="1"/>
<evidence type="ECO:0000250" key="2">
    <source>
        <dbReference type="UniProtKB" id="O15533"/>
    </source>
</evidence>
<evidence type="ECO:0000255" key="3"/>
<evidence type="ECO:0000255" key="4">
    <source>
        <dbReference type="PROSITE-ProRule" id="PRU00114"/>
    </source>
</evidence>
<evidence type="ECO:0000305" key="5"/>
<comment type="function">
    <text>Involved in the association of MHC class I with transporter associated with antigen processing (TAP) and in the assembly of MHC class I with peptide (peptide loading).</text>
</comment>
<comment type="subunit">
    <text evidence="2">Heterodimer with PDIA3; disulfide-linked. Obligatory mediator for the interaction between newly assembled MHC class I molecules, calreticulin, PDIA3 and TAP. Up to 4 MHC class I/tapasin complexes bind to 1 TAP. Interacts with HLA-G-B2M complex; this interaction is required for loading of high affinity peptides. On its own or as part of MHC class I peptide loading complex, interacts with ligand-free MR1 or MR1-B2M complex, providing for stable MR1 pools ready for metabolite antigen processing.</text>
</comment>
<comment type="subcellular location">
    <subcellularLocation>
        <location evidence="5">Endoplasmic reticulum membrane</location>
        <topology evidence="5">Single-pass type I membrane protein</topology>
    </subcellularLocation>
</comment>
<comment type="domain">
    <text evidence="1">The N-terminus is required for efficient association with MHC class I molecule and for a stable interaction between MHC I and calreticulin. Binding to TAP is mediated by the C-terminal region (By similarity).</text>
</comment>
<proteinExistence type="evidence at transcript level"/>
<reference key="1">
    <citation type="journal article" date="2005" name="J. Immunol.">
        <title>A mutant cell with a novel defect in MHC class I quality control.</title>
        <authorList>
            <person name="York I.A."/>
            <person name="Grant E.P."/>
            <person name="Dahl A.M."/>
            <person name="Rock K.L."/>
        </authorList>
    </citation>
    <scope>NUCLEOTIDE SEQUENCE [MRNA]</scope>
</reference>
<gene>
    <name type="primary">TAPBP</name>
</gene>
<sequence length="448" mass="47972">MKSLSLLLAVALGLATAVSAGPAVIECWFVEDTSGKGLAKRPGALLLRQGQGEPPPRPDLDPELYLNVHDPTGFLQAAFRRYPRDAPAPHCEMSRFVPLPASANWASGLTPARNCPRALDGAWLMVSMSSPVLSLSSLLRPQPEPQQEPVLITMATVVLTVLTHTPAPRVRLGQDALLDLSFAYMPPTSEAASSLAAGPPPFGLEWRRQHLGKGHLLLAATPGLNGQMPAAQEGAVAFAAWDDDEPWGPWTGNGTFWLPRVQPFQEGTYLATIHLPYLQGQVTLELAVYKPPKVSLMPATLAWAAPGEAPPELLCLVSHFYPPGGLEVEWELRGGPGGRSQKAEGQRWLSALRHHSDGSVSLSGHLQPPPVTTEQHGARYACRIHHPSLPASGRSAEVTLEVAGLSGPSLEDSIGLFLSAFFLLGLFKALGWAAVYLSTCKDSKKKAE</sequence>
<feature type="signal peptide" evidence="1">
    <location>
        <begin position="1"/>
        <end position="20"/>
    </location>
</feature>
<feature type="chain" id="PRO_0000014989" description="Tapasin">
    <location>
        <begin position="21"/>
        <end position="448"/>
    </location>
</feature>
<feature type="topological domain" description="Lumenal" evidence="3">
    <location>
        <begin position="21"/>
        <end position="414"/>
    </location>
</feature>
<feature type="transmembrane region" description="Helical" evidence="3">
    <location>
        <begin position="415"/>
        <end position="435"/>
    </location>
</feature>
<feature type="topological domain" description="Cytoplasmic" evidence="3">
    <location>
        <begin position="436"/>
        <end position="448"/>
    </location>
</feature>
<feature type="domain" description="Ig-like C1-type">
    <location>
        <begin position="292"/>
        <end position="399"/>
    </location>
</feature>
<feature type="site" description="May be involved in interaction with TAP" evidence="1">
    <location>
        <position position="428"/>
    </location>
</feature>
<feature type="glycosylation site" description="N-linked (GlcNAc...) asparagine" evidence="3">
    <location>
        <position position="253"/>
    </location>
</feature>
<feature type="disulfide bond" evidence="4">
    <location>
        <begin position="27"/>
        <end position="91"/>
    </location>
</feature>
<feature type="disulfide bond" description="Interchain (with C-57 in PDIA3)" evidence="4">
    <location>
        <position position="115"/>
    </location>
</feature>
<feature type="disulfide bond" evidence="4">
    <location>
        <begin position="315"/>
        <end position="382"/>
    </location>
</feature>
<organism>
    <name type="scientific">Chlorocebus aethiops</name>
    <name type="common">Green monkey</name>
    <name type="synonym">Cercopithecus aethiops</name>
    <dbReference type="NCBI Taxonomy" id="9534"/>
    <lineage>
        <taxon>Eukaryota</taxon>
        <taxon>Metazoa</taxon>
        <taxon>Chordata</taxon>
        <taxon>Craniata</taxon>
        <taxon>Vertebrata</taxon>
        <taxon>Euteleostomi</taxon>
        <taxon>Mammalia</taxon>
        <taxon>Eutheria</taxon>
        <taxon>Euarchontoglires</taxon>
        <taxon>Primates</taxon>
        <taxon>Haplorrhini</taxon>
        <taxon>Catarrhini</taxon>
        <taxon>Cercopithecidae</taxon>
        <taxon>Cercopithecinae</taxon>
        <taxon>Chlorocebus</taxon>
    </lineage>
</organism>
<dbReference type="EMBL" id="AY570382">
    <property type="protein sequence ID" value="AAS77386.1"/>
    <property type="molecule type" value="mRNA"/>
</dbReference>
<dbReference type="SMR" id="Q6PZD2"/>
<dbReference type="GlyCosmos" id="Q6PZD2">
    <property type="glycosylation" value="1 site, No reported glycans"/>
</dbReference>
<dbReference type="GO" id="GO:0005789">
    <property type="term" value="C:endoplasmic reticulum membrane"/>
    <property type="evidence" value="ECO:0007669"/>
    <property type="project" value="UniProtKB-SubCell"/>
</dbReference>
<dbReference type="GO" id="GO:0019885">
    <property type="term" value="P:antigen processing and presentation of endogenous peptide antigen via MHC class I"/>
    <property type="evidence" value="ECO:0007669"/>
    <property type="project" value="InterPro"/>
</dbReference>
<dbReference type="FunFam" id="2.60.40.10:FF:000924">
    <property type="entry name" value="TAP binding protein"/>
    <property type="match status" value="1"/>
</dbReference>
<dbReference type="FunFam" id="2.60.40.10:FF:001043">
    <property type="entry name" value="TAP binding protein"/>
    <property type="match status" value="1"/>
</dbReference>
<dbReference type="FunFam" id="2.60.40.10:FF:001044">
    <property type="entry name" value="TAP binding protein"/>
    <property type="match status" value="1"/>
</dbReference>
<dbReference type="Gene3D" id="2.60.40.10">
    <property type="entry name" value="Immunoglobulins"/>
    <property type="match status" value="3"/>
</dbReference>
<dbReference type="InterPro" id="IPR007110">
    <property type="entry name" value="Ig-like_dom"/>
</dbReference>
<dbReference type="InterPro" id="IPR036179">
    <property type="entry name" value="Ig-like_dom_sf"/>
</dbReference>
<dbReference type="InterPro" id="IPR013783">
    <property type="entry name" value="Ig-like_fold"/>
</dbReference>
<dbReference type="InterPro" id="IPR003597">
    <property type="entry name" value="Ig_C1-set"/>
</dbReference>
<dbReference type="InterPro" id="IPR050380">
    <property type="entry name" value="Immune_Resp_Modulators"/>
</dbReference>
<dbReference type="InterPro" id="IPR008056">
    <property type="entry name" value="Tapasin"/>
</dbReference>
<dbReference type="PANTHER" id="PTHR23411">
    <property type="entry name" value="TAPASIN"/>
    <property type="match status" value="1"/>
</dbReference>
<dbReference type="Pfam" id="PF07654">
    <property type="entry name" value="C1-set"/>
    <property type="match status" value="1"/>
</dbReference>
<dbReference type="PRINTS" id="PR01669">
    <property type="entry name" value="TAPASIN"/>
</dbReference>
<dbReference type="SUPFAM" id="SSF48726">
    <property type="entry name" value="Immunoglobulin"/>
    <property type="match status" value="1"/>
</dbReference>
<dbReference type="PROSITE" id="PS50835">
    <property type="entry name" value="IG_LIKE"/>
    <property type="match status" value="1"/>
</dbReference>
<protein>
    <recommendedName>
        <fullName>Tapasin</fullName>
        <shortName>TPN</shortName>
        <shortName>TPSN</shortName>
    </recommendedName>
    <alternativeName>
        <fullName>TAP-binding protein</fullName>
    </alternativeName>
</protein>
<accession>Q6PZD2</accession>